<accession>Q0CJD0</accession>
<evidence type="ECO:0000250" key="1">
    <source>
        <dbReference type="UniProtKB" id="P04798"/>
    </source>
</evidence>
<evidence type="ECO:0000255" key="2"/>
<evidence type="ECO:0000269" key="3">
    <source>
    </source>
</evidence>
<evidence type="ECO:0000269" key="4">
    <source>
    </source>
</evidence>
<evidence type="ECO:0000303" key="5">
    <source>
    </source>
</evidence>
<evidence type="ECO:0000303" key="6">
    <source>
    </source>
</evidence>
<evidence type="ECO:0000305" key="7"/>
<evidence type="ECO:0000305" key="8">
    <source>
    </source>
</evidence>
<feature type="chain" id="PRO_0000456004" description="Cytochrome P450 monooxygenase pgmC">
    <location>
        <begin position="1"/>
        <end position="532"/>
    </location>
</feature>
<feature type="transmembrane region" description="Helical" evidence="2">
    <location>
        <begin position="15"/>
        <end position="32"/>
    </location>
</feature>
<feature type="binding site" description="axial binding residue" evidence="1">
    <location>
        <position position="438"/>
    </location>
    <ligand>
        <name>heme</name>
        <dbReference type="ChEBI" id="CHEBI:30413"/>
    </ligand>
    <ligandPart>
        <name>Fe</name>
        <dbReference type="ChEBI" id="CHEBI:18248"/>
    </ligandPart>
</feature>
<reference key="1">
    <citation type="submission" date="2005-09" db="EMBL/GenBank/DDBJ databases">
        <title>Annotation of the Aspergillus terreus NIH2624 genome.</title>
        <authorList>
            <person name="Birren B.W."/>
            <person name="Lander E.S."/>
            <person name="Galagan J.E."/>
            <person name="Nusbaum C."/>
            <person name="Devon K."/>
            <person name="Henn M."/>
            <person name="Ma L.-J."/>
            <person name="Jaffe D.B."/>
            <person name="Butler J."/>
            <person name="Alvarez P."/>
            <person name="Gnerre S."/>
            <person name="Grabherr M."/>
            <person name="Kleber M."/>
            <person name="Mauceli E.W."/>
            <person name="Brockman W."/>
            <person name="Rounsley S."/>
            <person name="Young S.K."/>
            <person name="LaButti K."/>
            <person name="Pushparaj V."/>
            <person name="DeCaprio D."/>
            <person name="Crawford M."/>
            <person name="Koehrsen M."/>
            <person name="Engels R."/>
            <person name="Montgomery P."/>
            <person name="Pearson M."/>
            <person name="Howarth C."/>
            <person name="Larson L."/>
            <person name="Luoma S."/>
            <person name="White J."/>
            <person name="Alvarado L."/>
            <person name="Kodira C.D."/>
            <person name="Zeng Q."/>
            <person name="Oleary S."/>
            <person name="Yandava C."/>
            <person name="Denning D.W."/>
            <person name="Nierman W.C."/>
            <person name="Milne T."/>
            <person name="Madden K."/>
        </authorList>
    </citation>
    <scope>NUCLEOTIDE SEQUENCE [LARGE SCALE GENOMIC DNA]</scope>
    <source>
        <strain>NIH 2624 / FGSC A1156</strain>
    </source>
</reference>
<reference key="2">
    <citation type="journal article" date="2017" name="Microorganisms">
        <title>Melanisation of Aspergillus terreus-is butyrolactone I involved in the regulation of both DOPA and DHN types of pigments in submerged culture?</title>
        <authorList>
            <person name="Palonen E.K."/>
            <person name="Raina S."/>
            <person name="Brandt A."/>
            <person name="Meriluoto J."/>
            <person name="Keshavarz T."/>
            <person name="Soini J.T."/>
        </authorList>
    </citation>
    <scope>IDENTIFICATION</scope>
    <scope>FUNCTION</scope>
    <scope>INDUCTION</scope>
    <source>
        <strain>MUCL38669</strain>
    </source>
</reference>
<reference key="3">
    <citation type="journal article" date="2022" name="Fungal Genet. Biol.">
        <title>Identification of a polyketide biosynthesis gene cluster by transcriptional regulator activation in Aspergillus terreus.</title>
        <authorList>
            <person name="Tang S."/>
            <person name="Men P."/>
            <person name="Zhang W."/>
            <person name="Li H."/>
            <person name="Li Z."/>
            <person name="Huang X."/>
            <person name="Lu X."/>
        </authorList>
    </citation>
    <scope>FUNCTION</scope>
    <scope>INDUCTION</scope>
    <scope>DISRUPTION PHENOTYPE</scope>
    <scope>CATALYTIC ACTIVITY</scope>
    <scope>PATHWAY</scope>
</reference>
<protein>
    <recommendedName>
        <fullName evidence="5">Cytochrome P450 monooxygenase pgmC</fullName>
        <ecNumber evidence="4">1.-.-.-</ecNumber>
    </recommendedName>
    <alternativeName>
        <fullName evidence="6">Pigmented naphthoquinones biosynthesis cluster protein C</fullName>
    </alternativeName>
</protein>
<dbReference type="EC" id="1.-.-.-" evidence="4"/>
<dbReference type="EMBL" id="CH476601">
    <property type="protein sequence ID" value="EAU33965.1"/>
    <property type="status" value="ALT_SEQ"/>
    <property type="molecule type" value="Genomic_DNA"/>
</dbReference>
<dbReference type="RefSeq" id="XP_001215382.1">
    <property type="nucleotide sequence ID" value="XM_001215382.1"/>
</dbReference>
<dbReference type="STRING" id="341663.Q0CJD0"/>
<dbReference type="EnsemblFungi" id="EAU33965">
    <property type="protein sequence ID" value="EAU33965"/>
    <property type="gene ID" value="ATEG_06204"/>
</dbReference>
<dbReference type="GeneID" id="4321473"/>
<dbReference type="VEuPathDB" id="FungiDB:ATEG_06204"/>
<dbReference type="eggNOG" id="KOG0156">
    <property type="taxonomic scope" value="Eukaryota"/>
</dbReference>
<dbReference type="HOGENOM" id="CLU_001570_2_2_1"/>
<dbReference type="OrthoDB" id="1103324at2759"/>
<dbReference type="Proteomes" id="UP000007963">
    <property type="component" value="Unassembled WGS sequence"/>
</dbReference>
<dbReference type="GO" id="GO:0016020">
    <property type="term" value="C:membrane"/>
    <property type="evidence" value="ECO:0007669"/>
    <property type="project" value="UniProtKB-SubCell"/>
</dbReference>
<dbReference type="GO" id="GO:0020037">
    <property type="term" value="F:heme binding"/>
    <property type="evidence" value="ECO:0007669"/>
    <property type="project" value="InterPro"/>
</dbReference>
<dbReference type="GO" id="GO:0005506">
    <property type="term" value="F:iron ion binding"/>
    <property type="evidence" value="ECO:0007669"/>
    <property type="project" value="InterPro"/>
</dbReference>
<dbReference type="GO" id="GO:0004497">
    <property type="term" value="F:monooxygenase activity"/>
    <property type="evidence" value="ECO:0007669"/>
    <property type="project" value="InterPro"/>
</dbReference>
<dbReference type="GO" id="GO:0016705">
    <property type="term" value="F:oxidoreductase activity, acting on paired donors, with incorporation or reduction of molecular oxygen"/>
    <property type="evidence" value="ECO:0007669"/>
    <property type="project" value="InterPro"/>
</dbReference>
<dbReference type="CDD" id="cd11065">
    <property type="entry name" value="CYP64-like"/>
    <property type="match status" value="1"/>
</dbReference>
<dbReference type="Gene3D" id="1.10.630.10">
    <property type="entry name" value="Cytochrome P450"/>
    <property type="match status" value="1"/>
</dbReference>
<dbReference type="InterPro" id="IPR001128">
    <property type="entry name" value="Cyt_P450"/>
</dbReference>
<dbReference type="InterPro" id="IPR017972">
    <property type="entry name" value="Cyt_P450_CS"/>
</dbReference>
<dbReference type="InterPro" id="IPR002401">
    <property type="entry name" value="Cyt_P450_E_grp-I"/>
</dbReference>
<dbReference type="InterPro" id="IPR036396">
    <property type="entry name" value="Cyt_P450_sf"/>
</dbReference>
<dbReference type="InterPro" id="IPR050364">
    <property type="entry name" value="Cytochrome_P450_fung"/>
</dbReference>
<dbReference type="PANTHER" id="PTHR46300:SF11">
    <property type="entry name" value="OXIDOREDUCTASE, PUTATIVE-RELATED"/>
    <property type="match status" value="1"/>
</dbReference>
<dbReference type="PANTHER" id="PTHR46300">
    <property type="entry name" value="P450, PUTATIVE (EUROFUNG)-RELATED-RELATED"/>
    <property type="match status" value="1"/>
</dbReference>
<dbReference type="Pfam" id="PF00067">
    <property type="entry name" value="p450"/>
    <property type="match status" value="2"/>
</dbReference>
<dbReference type="PRINTS" id="PR00463">
    <property type="entry name" value="EP450I"/>
</dbReference>
<dbReference type="PRINTS" id="PR00385">
    <property type="entry name" value="P450"/>
</dbReference>
<dbReference type="SUPFAM" id="SSF48264">
    <property type="entry name" value="Cytochrome P450"/>
    <property type="match status" value="1"/>
</dbReference>
<dbReference type="PROSITE" id="PS00086">
    <property type="entry name" value="CYTOCHROME_P450"/>
    <property type="match status" value="1"/>
</dbReference>
<keyword id="KW-0408">Iron</keyword>
<keyword id="KW-0472">Membrane</keyword>
<keyword id="KW-0479">Metal-binding</keyword>
<keyword id="KW-0560">Oxidoreductase</keyword>
<keyword id="KW-1185">Reference proteome</keyword>
<keyword id="KW-0812">Transmembrane</keyword>
<keyword id="KW-1133">Transmembrane helix</keyword>
<gene>
    <name evidence="5" type="primary">pgmC</name>
    <name type="ORF">ATEG_06204</name>
</gene>
<comment type="function">
    <text evidence="3 4 8">Cytochrome P450 monooxygenase; part of the gene cluster that mediates the biosynthesis of pleosporalin A, ascomycone A, as well as a third cryptic naphthoquinone derived pigment, all responsible for the coloration of conidia (PubMed:28471414, PubMed:35351612). Involved in the oxidation of fusarubinaldehyde at C-9. PgmC has low substrate-specificity and is also able to use the pgmA product 3-acetonyl-1,6,8-trihydroxy-2-naphthaldehyde as a substrate (PubMed:35351612). The pathway begins with the biosynthesis of the cyclized heptaketide 3-acetonyl-1,6,8-trihydroxy-2-naphthaldehyde by the NR-PKS pgmA. The C-6 hydroxyl group is further methylated by the O-methyltransferase pgmB to yield fusarubinaldehyde which is in turn oxidized by the cytochrome P450 monooxygenase pgmC at C-9. The C-1 hydroxyl group is then methylated spontaneously. Although pgmE, pgmD and pgmH are essential for the production of pleosporalin A, it is not the case for the 2 other final products and it remains difficult to assign a specific function to each enzyme. PgmF and pgmG seem not to be involved in pigment biosynthesis although they were regulated by the cluster-specific transcription factor pgmR (Probable) (PubMed:35351612).</text>
</comment>
<comment type="cofactor">
    <cofactor evidence="1">
        <name>heme</name>
        <dbReference type="ChEBI" id="CHEBI:30413"/>
    </cofactor>
</comment>
<comment type="pathway">
    <text evidence="4">Pigment biosynthesis.</text>
</comment>
<comment type="pathway">
    <text evidence="4">Secondary metabolite biosynthesis.</text>
</comment>
<comment type="subcellular location">
    <subcellularLocation>
        <location evidence="2">Membrane</location>
        <topology evidence="2">Single-pass membrane protein</topology>
    </subcellularLocation>
</comment>
<comment type="induction">
    <text evidence="3 4">Expression is significantly up-regulated at the end of late growth phase, in the presence of Butyrolactone I (PubMed:28471414). Expression is positively regulated by the pgm cluster-specific transcription factor pgmR (PubMed:35351612).</text>
</comment>
<comment type="disruption phenotype">
    <text evidence="4">Abolished completely the production of the naphthoquinones derived pigments and leads to the accumulation of fusarubinaldehyde, the methylated product of pmgB.</text>
</comment>
<comment type="similarity">
    <text evidence="7">Belongs to the cytochrome P450 family.</text>
</comment>
<comment type="sequence caution" evidence="7">
    <conflict type="erroneous gene model prediction">
        <sequence resource="EMBL-CDS" id="EAU33965"/>
    </conflict>
</comment>
<name>PGMC_ASPTN</name>
<sequence length="532" mass="60308">MTDDIAPSGYQPHRISTLAVLIGFIALLTAWLRRDRRLASIPGPRTYPLVGLGYKLPPKAPALFRKWAMEYGDVFRIRVGWYDWVVINSPEAIAEILEKQAVKTSSKAPSPLGHDVVTGGNRMPTMPYGKEWRNLRSVVRQITTVPMTASFVPSQEFEAKQLLFDLATDNENQRNFYQHMRRYAFSIIMTNTFGTRVKSWDHPDAQNAVRSQAVLRRTSRPGAFLVDELPPLARLPKXXXXXXXXXXXAAKVETGKAPHCYAREIYESRESWYAKGATEEQLAWVSGGLVEAGFETTAGTLNSLVLYLAANPQVQKTAQEELMRAVGPHRLPTFEDTRRLPYIRACVKEVLRMNPILSPGIRHYADEDVVYKEHVIPKGTVLLANTAYLHYDPRRYKDPQKFMPERYLDHPLYSSDYAAMTDPSRRDHFTFSTGRRTCPGARLAENSLTIALAGMLWAFEIRPGLVDGVETEVDMSDDAYLDTGFTLPKPFAARFLPWSEERLQIVKEQWELASKKGYELRGVPVDIEGMTK</sequence>
<proteinExistence type="evidence at protein level"/>
<organism>
    <name type="scientific">Aspergillus terreus (strain NIH 2624 / FGSC A1156)</name>
    <dbReference type="NCBI Taxonomy" id="341663"/>
    <lineage>
        <taxon>Eukaryota</taxon>
        <taxon>Fungi</taxon>
        <taxon>Dikarya</taxon>
        <taxon>Ascomycota</taxon>
        <taxon>Pezizomycotina</taxon>
        <taxon>Eurotiomycetes</taxon>
        <taxon>Eurotiomycetidae</taxon>
        <taxon>Eurotiales</taxon>
        <taxon>Aspergillaceae</taxon>
        <taxon>Aspergillus</taxon>
        <taxon>Aspergillus subgen. Circumdati</taxon>
    </lineage>
</organism>